<feature type="chain" id="PRO_0000204080" description="Protein c-ets-2-A">
    <location>
        <begin position="1"/>
        <end position="472"/>
    </location>
</feature>
<feature type="domain" description="PNT" evidence="3">
    <location>
        <begin position="85"/>
        <end position="170"/>
    </location>
</feature>
<feature type="DNA-binding region" description="ETS" evidence="2">
    <location>
        <begin position="366"/>
        <end position="446"/>
    </location>
</feature>
<keyword id="KW-0238">DNA-binding</keyword>
<keyword id="KW-0539">Nucleus</keyword>
<keyword id="KW-1185">Reference proteome</keyword>
<keyword id="KW-0804">Transcription</keyword>
<keyword id="KW-0805">Transcription regulation</keyword>
<gene>
    <name type="primary">ets2-a</name>
</gene>
<proteinExistence type="evidence at transcript level"/>
<comment type="function">
    <text evidence="1">Probable transcription factor.</text>
</comment>
<comment type="subcellular location">
    <subcellularLocation>
        <location>Nucleus</location>
    </subcellularLocation>
</comment>
<comment type="similarity">
    <text evidence="4">Belongs to the ETS family.</text>
</comment>
<dbReference type="EMBL" id="M81683">
    <property type="protein sequence ID" value="AAA49705.1"/>
    <property type="molecule type" value="mRNA"/>
</dbReference>
<dbReference type="EMBL" id="X51826">
    <property type="protein sequence ID" value="CAA36124.1"/>
    <property type="molecule type" value="mRNA"/>
</dbReference>
<dbReference type="PIR" id="S28824">
    <property type="entry name" value="B53236"/>
</dbReference>
<dbReference type="SMR" id="P19102"/>
<dbReference type="AGR" id="Xenbase:XB-GENE-6084229"/>
<dbReference type="Xenbase" id="XB-GENE-6084229">
    <property type="gene designation" value="ets2.S"/>
</dbReference>
<dbReference type="Proteomes" id="UP000186698">
    <property type="component" value="Unplaced"/>
</dbReference>
<dbReference type="GO" id="GO:0005634">
    <property type="term" value="C:nucleus"/>
    <property type="evidence" value="ECO:0000318"/>
    <property type="project" value="GO_Central"/>
</dbReference>
<dbReference type="GO" id="GO:0000981">
    <property type="term" value="F:DNA-binding transcription factor activity, RNA polymerase II-specific"/>
    <property type="evidence" value="ECO:0000318"/>
    <property type="project" value="GO_Central"/>
</dbReference>
<dbReference type="GO" id="GO:0043565">
    <property type="term" value="F:sequence-specific DNA binding"/>
    <property type="evidence" value="ECO:0007669"/>
    <property type="project" value="InterPro"/>
</dbReference>
<dbReference type="GO" id="GO:0030154">
    <property type="term" value="P:cell differentiation"/>
    <property type="evidence" value="ECO:0000318"/>
    <property type="project" value="GO_Central"/>
</dbReference>
<dbReference type="GO" id="GO:0006357">
    <property type="term" value="P:regulation of transcription by RNA polymerase II"/>
    <property type="evidence" value="ECO:0000318"/>
    <property type="project" value="GO_Central"/>
</dbReference>
<dbReference type="CDD" id="cd08543">
    <property type="entry name" value="SAM_PNT-ETS-2"/>
    <property type="match status" value="1"/>
</dbReference>
<dbReference type="FunFam" id="1.10.10.10:FF:000097">
    <property type="entry name" value="Protein c-ets-1 isoform 1"/>
    <property type="match status" value="1"/>
</dbReference>
<dbReference type="FunFam" id="1.10.150.50:FF:000014">
    <property type="entry name" value="Protein c-ets-1 isoform 1"/>
    <property type="match status" value="1"/>
</dbReference>
<dbReference type="Gene3D" id="1.10.150.50">
    <property type="entry name" value="Transcription Factor, Ets-1"/>
    <property type="match status" value="1"/>
</dbReference>
<dbReference type="Gene3D" id="1.10.10.10">
    <property type="entry name" value="Winged helix-like DNA-binding domain superfamily/Winged helix DNA-binding domain"/>
    <property type="match status" value="1"/>
</dbReference>
<dbReference type="InterPro" id="IPR045688">
    <property type="entry name" value="Ets1_N_flank"/>
</dbReference>
<dbReference type="InterPro" id="IPR000418">
    <property type="entry name" value="Ets_dom"/>
</dbReference>
<dbReference type="InterPro" id="IPR046328">
    <property type="entry name" value="ETS_fam"/>
</dbReference>
<dbReference type="InterPro" id="IPR003118">
    <property type="entry name" value="Pointed_dom"/>
</dbReference>
<dbReference type="InterPro" id="IPR013761">
    <property type="entry name" value="SAM/pointed_sf"/>
</dbReference>
<dbReference type="InterPro" id="IPR016311">
    <property type="entry name" value="Transform_prot_C-ets"/>
</dbReference>
<dbReference type="InterPro" id="IPR027276">
    <property type="entry name" value="Transform_prot_C-ets-2"/>
</dbReference>
<dbReference type="InterPro" id="IPR036388">
    <property type="entry name" value="WH-like_DNA-bd_sf"/>
</dbReference>
<dbReference type="InterPro" id="IPR036390">
    <property type="entry name" value="WH_DNA-bd_sf"/>
</dbReference>
<dbReference type="PANTHER" id="PTHR11849">
    <property type="entry name" value="ETS"/>
    <property type="match status" value="1"/>
</dbReference>
<dbReference type="PANTHER" id="PTHR11849:SF188">
    <property type="entry name" value="PROTEIN C-ETS-2"/>
    <property type="match status" value="1"/>
</dbReference>
<dbReference type="Pfam" id="PF00178">
    <property type="entry name" value="Ets"/>
    <property type="match status" value="1"/>
</dbReference>
<dbReference type="Pfam" id="PF19525">
    <property type="entry name" value="Ets1_N_flank"/>
    <property type="match status" value="1"/>
</dbReference>
<dbReference type="Pfam" id="PF02198">
    <property type="entry name" value="SAM_PNT"/>
    <property type="match status" value="1"/>
</dbReference>
<dbReference type="PIRSF" id="PIRSF501032">
    <property type="entry name" value="C-ets-2"/>
    <property type="match status" value="1"/>
</dbReference>
<dbReference type="PIRSF" id="PIRSF001698">
    <property type="entry name" value="Transforming_factor_C-ets"/>
    <property type="match status" value="1"/>
</dbReference>
<dbReference type="PRINTS" id="PR00454">
    <property type="entry name" value="ETSDOMAIN"/>
</dbReference>
<dbReference type="SMART" id="SM00413">
    <property type="entry name" value="ETS"/>
    <property type="match status" value="1"/>
</dbReference>
<dbReference type="SMART" id="SM00251">
    <property type="entry name" value="SAM_PNT"/>
    <property type="match status" value="1"/>
</dbReference>
<dbReference type="SUPFAM" id="SSF47769">
    <property type="entry name" value="SAM/Pointed domain"/>
    <property type="match status" value="1"/>
</dbReference>
<dbReference type="SUPFAM" id="SSF46785">
    <property type="entry name" value="Winged helix' DNA-binding domain"/>
    <property type="match status" value="1"/>
</dbReference>
<dbReference type="PROSITE" id="PS00345">
    <property type="entry name" value="ETS_DOMAIN_1"/>
    <property type="match status" value="1"/>
</dbReference>
<dbReference type="PROSITE" id="PS00346">
    <property type="entry name" value="ETS_DOMAIN_2"/>
    <property type="match status" value="1"/>
</dbReference>
<dbReference type="PROSITE" id="PS50061">
    <property type="entry name" value="ETS_DOMAIN_3"/>
    <property type="match status" value="1"/>
</dbReference>
<dbReference type="PROSITE" id="PS51433">
    <property type="entry name" value="PNT"/>
    <property type="match status" value="1"/>
</dbReference>
<reference key="1">
    <citation type="journal article" date="1992" name="Nucleic Acids Res.">
        <title>Characterization of the cDNA sequences of two Xenopus ets-2 proto-oncogenes.</title>
        <authorList>
            <person name="Burdett L.A."/>
            <person name="Qi S.M."/>
            <person name="Chen Z.-Q."/>
            <person name="Lautenberger J.A."/>
            <person name="Papas T.S."/>
        </authorList>
    </citation>
    <scope>NUCLEOTIDE SEQUENCE [MRNA]</scope>
</reference>
<reference key="2">
    <citation type="journal article" date="1990" name="Nucleic Acids Res.">
        <title>Isolation of two different c-ets-2 proto-oncogenes in Xenopus laevis.</title>
        <authorList>
            <person name="Wolff C.M."/>
            <person name="Stiegler P."/>
            <person name="Baltzinger M."/>
            <person name="Meyer D."/>
            <person name="Ghysdael J."/>
            <person name="Stehelin D."/>
            <person name="Befort N."/>
            <person name="Remy P."/>
        </authorList>
    </citation>
    <scope>NUCLEOTIDE SEQUENCE [MRNA] OF 121-472</scope>
    <source>
        <tissue>Oocyte</tissue>
    </source>
</reference>
<reference key="3">
    <citation type="journal article" date="1991" name="Cell Growth Differ.">
        <title>Cloning, sequencing, and expression of two Xenopus laevis c-ets-2 protooncogenes.</title>
        <authorList>
            <person name="Wolff C.M."/>
            <person name="Stiegler P."/>
            <person name="Baltzinger M."/>
            <person name="Meyer D."/>
            <person name="Ghysdael J."/>
            <person name="Stehelin D."/>
            <person name="Befort N."/>
            <person name="Remy P."/>
        </authorList>
    </citation>
    <scope>NUCLEOTIDE SEQUENCE [MRNA] OF 121-472</scope>
</reference>
<name>ETS2A_XENLA</name>
<sequence>MTEFGIRNMDQVAPVYNGHRAMLKRQLAFDNVSVPTSLYSGLFSAYEEEQAVPTGLDSYSHDSSSCELPLLTPCSKAVMSQALKNTFNGFAKKRFRLGILSNPWLWDENNVFQWLWWAAKEFSLQNVNFQKFLMNGHELCSLGKERFLALAPDFVGDILWEHLEEMMKEHQEKAQEPYIDHSNQDSINHWMNADSLNFTTDPLQCGAQVHNYPKNGMFNDMCSVPTGQTLLQPKQEFQQYPSSCLKSRAVNYSPASQDFARSNMNALLNSLNSGKLRDYDSGDSGTESFESTESLLQSWTSQSSLVDMQRVPSYDGFEEDGSQALCLNKPPMSFKDYIQDRCEPAELGKPVIPASILAGFTGSGPIQLWQFLLELLTDKSCQSFISWTGDGWEFKLTDPDEVARRWGKRKNKPKMNYEKLSRGLRYYYDKNIIHKTSGKRYVYRFVCDLHNLLGYTPDELHAMLGVQPDTDE</sequence>
<organism>
    <name type="scientific">Xenopus laevis</name>
    <name type="common">African clawed frog</name>
    <dbReference type="NCBI Taxonomy" id="8355"/>
    <lineage>
        <taxon>Eukaryota</taxon>
        <taxon>Metazoa</taxon>
        <taxon>Chordata</taxon>
        <taxon>Craniata</taxon>
        <taxon>Vertebrata</taxon>
        <taxon>Euteleostomi</taxon>
        <taxon>Amphibia</taxon>
        <taxon>Batrachia</taxon>
        <taxon>Anura</taxon>
        <taxon>Pipoidea</taxon>
        <taxon>Pipidae</taxon>
        <taxon>Xenopodinae</taxon>
        <taxon>Xenopus</taxon>
        <taxon>Xenopus</taxon>
    </lineage>
</organism>
<evidence type="ECO:0000250" key="1"/>
<evidence type="ECO:0000255" key="2">
    <source>
        <dbReference type="PROSITE-ProRule" id="PRU00237"/>
    </source>
</evidence>
<evidence type="ECO:0000255" key="3">
    <source>
        <dbReference type="PROSITE-ProRule" id="PRU00762"/>
    </source>
</evidence>
<evidence type="ECO:0000305" key="4"/>
<protein>
    <recommendedName>
        <fullName>Protein c-ets-2-A</fullName>
        <shortName>C-ets-2A</shortName>
    </recommendedName>
</protein>
<accession>P19102</accession>